<organism>
    <name type="scientific">Escherichia coli O157:H7</name>
    <dbReference type="NCBI Taxonomy" id="83334"/>
    <lineage>
        <taxon>Bacteria</taxon>
        <taxon>Pseudomonadati</taxon>
        <taxon>Pseudomonadota</taxon>
        <taxon>Gammaproteobacteria</taxon>
        <taxon>Enterobacterales</taxon>
        <taxon>Enterobacteriaceae</taxon>
        <taxon>Escherichia</taxon>
    </lineage>
</organism>
<dbReference type="EC" id="3.4.13.9" evidence="1"/>
<dbReference type="EMBL" id="AE005174">
    <property type="protein sequence ID" value="AAG59041.1"/>
    <property type="molecule type" value="Genomic_DNA"/>
</dbReference>
<dbReference type="EMBL" id="BA000007">
    <property type="protein sequence ID" value="BAB38198.1"/>
    <property type="molecule type" value="Genomic_DNA"/>
</dbReference>
<dbReference type="PIR" id="E86072">
    <property type="entry name" value="E86072"/>
</dbReference>
<dbReference type="PIR" id="G91225">
    <property type="entry name" value="G91225"/>
</dbReference>
<dbReference type="RefSeq" id="NP_312802.1">
    <property type="nucleotide sequence ID" value="NC_002695.1"/>
</dbReference>
<dbReference type="RefSeq" id="WP_000444585.1">
    <property type="nucleotide sequence ID" value="NZ_VOAI01000017.1"/>
</dbReference>
<dbReference type="SMR" id="Q8X8I1"/>
<dbReference type="STRING" id="155864.Z5369"/>
<dbReference type="MEROPS" id="M24.003"/>
<dbReference type="GeneID" id="915127"/>
<dbReference type="KEGG" id="ece:Z5369"/>
<dbReference type="KEGG" id="ecs:ECs_4775"/>
<dbReference type="PATRIC" id="fig|386585.9.peg.4984"/>
<dbReference type="eggNOG" id="COG0006">
    <property type="taxonomic scope" value="Bacteria"/>
</dbReference>
<dbReference type="HOGENOM" id="CLU_050675_0_0_6"/>
<dbReference type="OMA" id="DFWHKVA"/>
<dbReference type="Proteomes" id="UP000000558">
    <property type="component" value="Chromosome"/>
</dbReference>
<dbReference type="Proteomes" id="UP000002519">
    <property type="component" value="Chromosome"/>
</dbReference>
<dbReference type="GO" id="GO:0005829">
    <property type="term" value="C:cytosol"/>
    <property type="evidence" value="ECO:0007669"/>
    <property type="project" value="TreeGrafter"/>
</dbReference>
<dbReference type="GO" id="GO:0004177">
    <property type="term" value="F:aminopeptidase activity"/>
    <property type="evidence" value="ECO:0007669"/>
    <property type="project" value="TreeGrafter"/>
</dbReference>
<dbReference type="GO" id="GO:0046872">
    <property type="term" value="F:metal ion binding"/>
    <property type="evidence" value="ECO:0007669"/>
    <property type="project" value="UniProtKB-KW"/>
</dbReference>
<dbReference type="GO" id="GO:0008235">
    <property type="term" value="F:metalloexopeptidase activity"/>
    <property type="evidence" value="ECO:0007669"/>
    <property type="project" value="UniProtKB-UniRule"/>
</dbReference>
<dbReference type="GO" id="GO:0016795">
    <property type="term" value="F:phosphoric triester hydrolase activity"/>
    <property type="evidence" value="ECO:0007669"/>
    <property type="project" value="InterPro"/>
</dbReference>
<dbReference type="GO" id="GO:0102009">
    <property type="term" value="F:proline dipeptidase activity"/>
    <property type="evidence" value="ECO:0007669"/>
    <property type="project" value="UniProtKB-EC"/>
</dbReference>
<dbReference type="GO" id="GO:0006508">
    <property type="term" value="P:proteolysis"/>
    <property type="evidence" value="ECO:0007669"/>
    <property type="project" value="UniProtKB-KW"/>
</dbReference>
<dbReference type="CDD" id="cd01087">
    <property type="entry name" value="Prolidase"/>
    <property type="match status" value="1"/>
</dbReference>
<dbReference type="FunFam" id="3.40.350.10:FF:000002">
    <property type="entry name" value="Xaa-Pro dipeptidase"/>
    <property type="match status" value="1"/>
</dbReference>
<dbReference type="FunFam" id="3.90.230.10:FF:000006">
    <property type="entry name" value="Xaa-Pro dipeptidase"/>
    <property type="match status" value="1"/>
</dbReference>
<dbReference type="Gene3D" id="3.90.230.10">
    <property type="entry name" value="Creatinase/methionine aminopeptidase superfamily"/>
    <property type="match status" value="1"/>
</dbReference>
<dbReference type="Gene3D" id="3.40.350.10">
    <property type="entry name" value="Creatinase/prolidase N-terminal domain"/>
    <property type="match status" value="1"/>
</dbReference>
<dbReference type="HAMAP" id="MF_01279">
    <property type="entry name" value="X_Pro_dipeptid"/>
    <property type="match status" value="1"/>
</dbReference>
<dbReference type="InterPro" id="IPR029149">
    <property type="entry name" value="Creatin/AminoP/Spt16_N"/>
</dbReference>
<dbReference type="InterPro" id="IPR036005">
    <property type="entry name" value="Creatinase/aminopeptidase-like"/>
</dbReference>
<dbReference type="InterPro" id="IPR048819">
    <property type="entry name" value="PepQ_N"/>
</dbReference>
<dbReference type="InterPro" id="IPR000994">
    <property type="entry name" value="Pept_M24"/>
</dbReference>
<dbReference type="InterPro" id="IPR001131">
    <property type="entry name" value="Peptidase_M24B_aminopep-P_CS"/>
</dbReference>
<dbReference type="InterPro" id="IPR052433">
    <property type="entry name" value="X-Pro_dipept-like"/>
</dbReference>
<dbReference type="InterPro" id="IPR022846">
    <property type="entry name" value="X_Pro_dipept"/>
</dbReference>
<dbReference type="NCBIfam" id="NF010133">
    <property type="entry name" value="PRK13607.1"/>
    <property type="match status" value="1"/>
</dbReference>
<dbReference type="PANTHER" id="PTHR43226">
    <property type="entry name" value="XAA-PRO AMINOPEPTIDASE 3"/>
    <property type="match status" value="1"/>
</dbReference>
<dbReference type="PANTHER" id="PTHR43226:SF8">
    <property type="entry name" value="XAA-PRO DIPEPTIDASE"/>
    <property type="match status" value="1"/>
</dbReference>
<dbReference type="Pfam" id="PF21216">
    <property type="entry name" value="PepQ_N"/>
    <property type="match status" value="1"/>
</dbReference>
<dbReference type="Pfam" id="PF00557">
    <property type="entry name" value="Peptidase_M24"/>
    <property type="match status" value="1"/>
</dbReference>
<dbReference type="SUPFAM" id="SSF55920">
    <property type="entry name" value="Creatinase/aminopeptidase"/>
    <property type="match status" value="1"/>
</dbReference>
<dbReference type="PROSITE" id="PS00491">
    <property type="entry name" value="PROLINE_PEPTIDASE"/>
    <property type="match status" value="1"/>
</dbReference>
<accession>Q8X8I1</accession>
<accession>Q7A9D2</accession>
<evidence type="ECO:0000255" key="1">
    <source>
        <dbReference type="HAMAP-Rule" id="MF_01279"/>
    </source>
</evidence>
<name>PEPQ_ECO57</name>
<reference key="1">
    <citation type="journal article" date="2001" name="Nature">
        <title>Genome sequence of enterohaemorrhagic Escherichia coli O157:H7.</title>
        <authorList>
            <person name="Perna N.T."/>
            <person name="Plunkett G. III"/>
            <person name="Burland V."/>
            <person name="Mau B."/>
            <person name="Glasner J.D."/>
            <person name="Rose D.J."/>
            <person name="Mayhew G.F."/>
            <person name="Evans P.S."/>
            <person name="Gregor J."/>
            <person name="Kirkpatrick H.A."/>
            <person name="Posfai G."/>
            <person name="Hackett J."/>
            <person name="Klink S."/>
            <person name="Boutin A."/>
            <person name="Shao Y."/>
            <person name="Miller L."/>
            <person name="Grotbeck E.J."/>
            <person name="Davis N.W."/>
            <person name="Lim A."/>
            <person name="Dimalanta E.T."/>
            <person name="Potamousis K."/>
            <person name="Apodaca J."/>
            <person name="Anantharaman T.S."/>
            <person name="Lin J."/>
            <person name="Yen G."/>
            <person name="Schwartz D.C."/>
            <person name="Welch R.A."/>
            <person name="Blattner F.R."/>
        </authorList>
    </citation>
    <scope>NUCLEOTIDE SEQUENCE [LARGE SCALE GENOMIC DNA]</scope>
    <source>
        <strain>O157:H7 / EDL933 / ATCC 700927 / EHEC</strain>
    </source>
</reference>
<reference key="2">
    <citation type="journal article" date="2001" name="DNA Res.">
        <title>Complete genome sequence of enterohemorrhagic Escherichia coli O157:H7 and genomic comparison with a laboratory strain K-12.</title>
        <authorList>
            <person name="Hayashi T."/>
            <person name="Makino K."/>
            <person name="Ohnishi M."/>
            <person name="Kurokawa K."/>
            <person name="Ishii K."/>
            <person name="Yokoyama K."/>
            <person name="Han C.-G."/>
            <person name="Ohtsubo E."/>
            <person name="Nakayama K."/>
            <person name="Murata T."/>
            <person name="Tanaka M."/>
            <person name="Tobe T."/>
            <person name="Iida T."/>
            <person name="Takami H."/>
            <person name="Honda T."/>
            <person name="Sasakawa C."/>
            <person name="Ogasawara N."/>
            <person name="Yasunaga T."/>
            <person name="Kuhara S."/>
            <person name="Shiba T."/>
            <person name="Hattori M."/>
            <person name="Shinagawa H."/>
        </authorList>
    </citation>
    <scope>NUCLEOTIDE SEQUENCE [LARGE SCALE GENOMIC DNA]</scope>
    <source>
        <strain>O157:H7 / Sakai / RIMD 0509952 / EHEC</strain>
    </source>
</reference>
<feature type="chain" id="PRO_0000303842" description="Xaa-Pro dipeptidase">
    <location>
        <begin position="1"/>
        <end position="443"/>
    </location>
</feature>
<feature type="binding site" evidence="1">
    <location>
        <position position="246"/>
    </location>
    <ligand>
        <name>Mn(2+)</name>
        <dbReference type="ChEBI" id="CHEBI:29035"/>
        <label>2</label>
    </ligand>
</feature>
<feature type="binding site" evidence="1">
    <location>
        <position position="257"/>
    </location>
    <ligand>
        <name>Mn(2+)</name>
        <dbReference type="ChEBI" id="CHEBI:29035"/>
        <label>1</label>
    </ligand>
</feature>
<feature type="binding site" evidence="1">
    <location>
        <position position="257"/>
    </location>
    <ligand>
        <name>Mn(2+)</name>
        <dbReference type="ChEBI" id="CHEBI:29035"/>
        <label>2</label>
    </ligand>
</feature>
<feature type="binding site" evidence="1">
    <location>
        <position position="339"/>
    </location>
    <ligand>
        <name>Mn(2+)</name>
        <dbReference type="ChEBI" id="CHEBI:29035"/>
        <label>1</label>
    </ligand>
</feature>
<feature type="binding site" evidence="1">
    <location>
        <position position="384"/>
    </location>
    <ligand>
        <name>Mn(2+)</name>
        <dbReference type="ChEBI" id="CHEBI:29035"/>
        <label>1</label>
    </ligand>
</feature>
<feature type="binding site" evidence="1">
    <location>
        <position position="423"/>
    </location>
    <ligand>
        <name>Mn(2+)</name>
        <dbReference type="ChEBI" id="CHEBI:29035"/>
        <label>1</label>
    </ligand>
</feature>
<feature type="binding site" evidence="1">
    <location>
        <position position="423"/>
    </location>
    <ligand>
        <name>Mn(2+)</name>
        <dbReference type="ChEBI" id="CHEBI:29035"/>
        <label>2</label>
    </ligand>
</feature>
<comment type="function">
    <text evidence="1">Splits dipeptides with a prolyl residue in the C-terminal position.</text>
</comment>
<comment type="catalytic activity">
    <reaction evidence="1">
        <text>Xaa-L-Pro dipeptide + H2O = an L-alpha-amino acid + L-proline</text>
        <dbReference type="Rhea" id="RHEA:76407"/>
        <dbReference type="ChEBI" id="CHEBI:15377"/>
        <dbReference type="ChEBI" id="CHEBI:59869"/>
        <dbReference type="ChEBI" id="CHEBI:60039"/>
        <dbReference type="ChEBI" id="CHEBI:195196"/>
        <dbReference type="EC" id="3.4.13.9"/>
    </reaction>
</comment>
<comment type="cofactor">
    <cofactor evidence="1">
        <name>Mn(2+)</name>
        <dbReference type="ChEBI" id="CHEBI:29035"/>
    </cofactor>
    <text evidence="1">Binds 2 manganese ions per subunit.</text>
</comment>
<comment type="similarity">
    <text evidence="1">Belongs to the peptidase M24B family. Bacterial-type prolidase subfamily.</text>
</comment>
<keyword id="KW-0224">Dipeptidase</keyword>
<keyword id="KW-0378">Hydrolase</keyword>
<keyword id="KW-0464">Manganese</keyword>
<keyword id="KW-0479">Metal-binding</keyword>
<keyword id="KW-0482">Metalloprotease</keyword>
<keyword id="KW-0645">Protease</keyword>
<keyword id="KW-1185">Reference proteome</keyword>
<gene>
    <name evidence="1" type="primary">pepQ</name>
    <name type="ordered locus">Z5369</name>
    <name type="ordered locus">ECs4775</name>
</gene>
<sequence>MESLASLYKNHIATLQERTRDALTRFKLDALLIHSGELFNVFLDDHPYPFKVNPQFKAWVPVTQVPNCWLLVDGVNKPKLWFYLPVDYWHNVEPLPTSFWTEDVEVIALPKADGIGSLLPAARGNIGYIGPVPERALQLGIEASNINPKGVIDYLHYYRSFKTEYELACMREAQKMAVNGHRAAEEAFRSGMSEFDINIAYLTATGHRDTDVPYSNIVALNEHAAVLHYTKLDHQASEEMRSFLLDAGAEYNGYAADLTRTWSAKSDNDYAQLVKDVNDEQLALIATMKAGVSYVDYHIQFHQRIAKLLRKHQIITDMSEEAMVENDLTGPFMPHGIGHPLGLQVHDVAGFMQDDSGTHLAAPAKYPYLRCTRILQPGMVLTIEPGIYFIESLLAPWREGQFSKHFNWQKIEALKPFGGIRIEDNVVIHENNVENMTRDLKLA</sequence>
<protein>
    <recommendedName>
        <fullName evidence="1">Xaa-Pro dipeptidase</fullName>
        <shortName evidence="1">X-Pro dipeptidase</shortName>
        <ecNumber evidence="1">3.4.13.9</ecNumber>
    </recommendedName>
    <alternativeName>
        <fullName evidence="1">Imidodipeptidase</fullName>
    </alternativeName>
    <alternativeName>
        <fullName evidence="1">Proline dipeptidase</fullName>
        <shortName evidence="1">Prolidase</shortName>
    </alternativeName>
</protein>
<proteinExistence type="inferred from homology"/>